<protein>
    <recommendedName>
        <fullName evidence="3">Tetrathionate hydrolase</fullName>
        <shortName evidence="1">4THase</shortName>
        <shortName evidence="3">TTH</shortName>
        <ecNumber evidence="2">3.12.1.-</ecNumber>
    </recommendedName>
</protein>
<sequence length="535" mass="57659">MNLKILVGLFILGIIILSAMTFLNFTTIVAQDKGDQQPKGPIVYTYTEYNGTYFPHILTVVYYPCNATCSNLGFPSVWPVSNENQCHNAVVNTTCQALIEGVDWQLPLLNYVGGVAIPLSTPPCKLPWAQQLGVKGALVYYTQMVGEPLGVTLACGLLYATEDSMPGSITAINPVTGKIVWMANGLAGPAMNNPVVWHGIVYVSVGGVCFTFSQFVHFEDHQYCKIHRGRCGAVYAFNATNGQLLWMRFTYGEAMPAPAIYDGILAYVTGGGCFVGVNATTGQTLWVDHFPGFIANMASVNYYVLPNGTPLFIAGFTYTAPPYGYIIAVNGLNGHEAWNATMPAPYVGANTGLGDVAPAVDQQLGIVVDNDIANFSNGYVDMVTFALNATNGKPLWAVNTGRGPIPPAYKGGMPLIVGNVVYDGNPSLGTVNAICIKTGKILWSTKLPCLQTPPKFPGGPRGSPTYYHGLLWVSAGQYVYVINPKNGDILTFYWIGGRLGIMNPVIAGNTMFLSNSYGWIVAIPLSQIYPAYIYY</sequence>
<gene>
    <name evidence="3" type="primary">tth1</name>
</gene>
<feature type="signal peptide" evidence="2">
    <location>
        <begin position="1"/>
        <end position="39"/>
    </location>
</feature>
<feature type="chain" id="PRO_0000444002" description="Tetrathionate hydrolase">
    <location>
        <begin position="40"/>
        <end position="535"/>
    </location>
</feature>
<feature type="glycosylation site" description="N-linked (GlcNAc...) asparagine" evidence="2">
    <location>
        <position position="50"/>
    </location>
</feature>
<keyword id="KW-0903">Direct protein sequencing</keyword>
<keyword id="KW-0325">Glycoprotein</keyword>
<keyword id="KW-0378">Hydrolase</keyword>
<keyword id="KW-0732">Signal</keyword>
<proteinExistence type="evidence at protein level"/>
<accession>G8YXZ9</accession>
<organism>
    <name type="scientific">Acidianus ambivalens</name>
    <name type="common">Desulfurolobus ambivalens</name>
    <dbReference type="NCBI Taxonomy" id="2283"/>
    <lineage>
        <taxon>Archaea</taxon>
        <taxon>Thermoproteota</taxon>
        <taxon>Thermoprotei</taxon>
        <taxon>Sulfolobales</taxon>
        <taxon>Sulfolobaceae</taxon>
        <taxon>Acidianus</taxon>
    </lineage>
</organism>
<comment type="function">
    <text evidence="2">Catalyzes the hydrolysis of tetrathionate to generate elemental sulfur, thiosulfate and sulfate.</text>
</comment>
<comment type="catalytic activity">
    <reaction evidence="2">
        <text>tetrathionate + H2O = sulfur + thiosulfate + sulfate + H(+)</text>
        <dbReference type="Rhea" id="RHEA:13541"/>
        <dbReference type="ChEBI" id="CHEBI:15226"/>
        <dbReference type="ChEBI" id="CHEBI:15377"/>
        <dbReference type="ChEBI" id="CHEBI:15378"/>
        <dbReference type="ChEBI" id="CHEBI:16189"/>
        <dbReference type="ChEBI" id="CHEBI:26833"/>
        <dbReference type="ChEBI" id="CHEBI:33542"/>
    </reaction>
</comment>
<comment type="biophysicochemical properties">
    <kinetics>
        <KM evidence="2">0.8 mM for tetrathionate (at pH 1 and 80 degrees Celsius)</KM>
    </kinetics>
    <phDependence>
        <text evidence="2">Optimum pH is 1. No activity is detected at pH 6.</text>
    </phDependence>
    <temperatureDependence>
        <text evidence="2">Optimum temperature is 95 degrees Celsius.</text>
    </temperatureDependence>
</comment>
<comment type="subunit">
    <text evidence="2">Monomer and homodimer; in equilibrium.</text>
</comment>
<comment type="subcellular location">
    <subcellularLocation>
        <location evidence="2">Cell surface</location>
    </subcellularLocation>
    <text evidence="2">Associated with the S-layer in the pseudo-periplasmic space.</text>
</comment>
<comment type="induction">
    <text evidence="2">Expressed in tetrathionate-grown cells.</text>
</comment>
<comment type="similarity">
    <text evidence="4">Belongs to the tetrathionate hydrolase family.</text>
</comment>
<reference key="1">
    <citation type="journal article" date="2011" name="Front. Microbiol.">
        <title>An extracellular tetrathionate hydrolase from the thermoacidophilic archaeon Acidianus ambivalens with an activity optimum at pH 1.</title>
        <authorList>
            <person name="Protze J."/>
            <person name="Mueller F."/>
            <person name="Lauber K."/>
            <person name="Nass B."/>
            <person name="Mentele R."/>
            <person name="Lottspeich F."/>
            <person name="Kletzin A."/>
        </authorList>
    </citation>
    <scope>NUCLEOTIDE SEQUENCE [GENOMIC DNA]</scope>
    <scope>PROTEIN SEQUENCE OF 40-53</scope>
    <scope>FUNCTION</scope>
    <scope>CATALYTIC ACTIVITY</scope>
    <scope>BIOPHYSICOCHEMICAL PROPERTIES</scope>
    <scope>SUBUNIT</scope>
    <scope>SUBCELLULAR LOCATION</scope>
    <scope>INDUCTION</scope>
    <scope>GLYCOSYLATION AT ASN-50</scope>
    <source>
        <strain>Lei 10 / DSM 3772 / JCM 9191</strain>
    </source>
</reference>
<dbReference type="EC" id="3.12.1.-" evidence="2"/>
<dbReference type="EMBL" id="FR734215">
    <property type="protein sequence ID" value="CBY66038.1"/>
    <property type="molecule type" value="Genomic_DNA"/>
</dbReference>
<dbReference type="RefSeq" id="WP_231136389.1">
    <property type="nucleotide sequence ID" value="NZ_CP045482.1"/>
</dbReference>
<dbReference type="SMR" id="G8YXZ9"/>
<dbReference type="GlyCosmos" id="G8YXZ9">
    <property type="glycosylation" value="1 site, No reported glycans"/>
</dbReference>
<dbReference type="iPTMnet" id="G8YXZ9"/>
<dbReference type="GeneID" id="42778753"/>
<dbReference type="BRENDA" id="3.12.1.B1">
    <property type="organism ID" value="86"/>
</dbReference>
<dbReference type="GO" id="GO:0009986">
    <property type="term" value="C:cell surface"/>
    <property type="evidence" value="ECO:0007669"/>
    <property type="project" value="UniProtKB-SubCell"/>
</dbReference>
<dbReference type="GO" id="GO:0016787">
    <property type="term" value="F:hydrolase activity"/>
    <property type="evidence" value="ECO:0007669"/>
    <property type="project" value="UniProtKB-KW"/>
</dbReference>
<dbReference type="Gene3D" id="2.40.128.630">
    <property type="match status" value="1"/>
</dbReference>
<dbReference type="Gene3D" id="2.130.10.10">
    <property type="entry name" value="YVTN repeat-like/Quinoprotein amine dehydrogenase"/>
    <property type="match status" value="1"/>
</dbReference>
<dbReference type="InterPro" id="IPR018391">
    <property type="entry name" value="PQQ_b-propeller_rpt"/>
</dbReference>
<dbReference type="InterPro" id="IPR002372">
    <property type="entry name" value="PQQ_rpt_dom"/>
</dbReference>
<dbReference type="InterPro" id="IPR011047">
    <property type="entry name" value="Quinoprotein_ADH-like_sf"/>
</dbReference>
<dbReference type="InterPro" id="IPR015943">
    <property type="entry name" value="WD40/YVTN_repeat-like_dom_sf"/>
</dbReference>
<dbReference type="PANTHER" id="PTHR34512">
    <property type="entry name" value="CELL SURFACE PROTEIN"/>
    <property type="match status" value="1"/>
</dbReference>
<dbReference type="PANTHER" id="PTHR34512:SF30">
    <property type="entry name" value="OUTER MEMBRANE PROTEIN ASSEMBLY FACTOR BAMB"/>
    <property type="match status" value="1"/>
</dbReference>
<dbReference type="Pfam" id="PF13360">
    <property type="entry name" value="PQQ_2"/>
    <property type="match status" value="2"/>
</dbReference>
<dbReference type="SMART" id="SM00564">
    <property type="entry name" value="PQQ"/>
    <property type="match status" value="5"/>
</dbReference>
<dbReference type="SUPFAM" id="SSF50998">
    <property type="entry name" value="Quinoprotein alcohol dehydrogenase-like"/>
    <property type="match status" value="1"/>
</dbReference>
<evidence type="ECO:0000250" key="1">
    <source>
        <dbReference type="UniProtKB" id="B7J3C9"/>
    </source>
</evidence>
<evidence type="ECO:0000269" key="2">
    <source>
    </source>
</evidence>
<evidence type="ECO:0000303" key="3">
    <source>
    </source>
</evidence>
<evidence type="ECO:0000305" key="4"/>
<name>TTH_ACIAM</name>